<sequence>MDNLQNVLKIGLPKGSLQDSTLELFANAGFHFSVQSRSYFPSIEDDELEAILIRAQEMAHYVELGAFDVGLTGKDWIIETDADVVEVADLVYSKASMRPVRWVLAVPESSAIKSVKDLEGKHIATEVVNITKKYLARNGVNASVEFSWGATEVKPPDLADAIVEVTETGSSLRANKLRIVDTILESNTKLIANKASWNDSWKREKIENMAMLLQGAINAQGKVGLKMNAPKAALQNIAAIIPALRQPTISNLADENWVALEVIVSEKTVRKLIPELKRAGAEGIFEYNINKLID</sequence>
<evidence type="ECO:0000255" key="1">
    <source>
        <dbReference type="HAMAP-Rule" id="MF_00079"/>
    </source>
</evidence>
<comment type="function">
    <text evidence="1">Catalyzes the condensation of ATP and 5-phosphoribose 1-diphosphate to form N'-(5'-phosphoribosyl)-ATP (PR-ATP). Has a crucial role in the pathway because the rate of histidine biosynthesis seems to be controlled primarily by regulation of HisG enzymatic activity.</text>
</comment>
<comment type="catalytic activity">
    <reaction evidence="1">
        <text>1-(5-phospho-beta-D-ribosyl)-ATP + diphosphate = 5-phospho-alpha-D-ribose 1-diphosphate + ATP</text>
        <dbReference type="Rhea" id="RHEA:18473"/>
        <dbReference type="ChEBI" id="CHEBI:30616"/>
        <dbReference type="ChEBI" id="CHEBI:33019"/>
        <dbReference type="ChEBI" id="CHEBI:58017"/>
        <dbReference type="ChEBI" id="CHEBI:73183"/>
        <dbReference type="EC" id="2.4.2.17"/>
    </reaction>
</comment>
<comment type="cofactor">
    <cofactor evidence="1">
        <name>Mg(2+)</name>
        <dbReference type="ChEBI" id="CHEBI:18420"/>
    </cofactor>
</comment>
<comment type="activity regulation">
    <text evidence="1">Feedback inhibited by histidine.</text>
</comment>
<comment type="pathway">
    <text evidence="1">Amino-acid biosynthesis; L-histidine biosynthesis; L-histidine from 5-phospho-alpha-D-ribose 1-diphosphate: step 1/9.</text>
</comment>
<comment type="subcellular location">
    <subcellularLocation>
        <location evidence="1">Cytoplasm</location>
    </subcellularLocation>
</comment>
<comment type="similarity">
    <text evidence="1">Belongs to the ATP phosphoribosyltransferase family. Long subfamily.</text>
</comment>
<name>HIS1_CHLPD</name>
<organism>
    <name type="scientific">Chlorobium phaeobacteroides (strain DSM 266 / SMG 266 / 2430)</name>
    <dbReference type="NCBI Taxonomy" id="290317"/>
    <lineage>
        <taxon>Bacteria</taxon>
        <taxon>Pseudomonadati</taxon>
        <taxon>Chlorobiota</taxon>
        <taxon>Chlorobiia</taxon>
        <taxon>Chlorobiales</taxon>
        <taxon>Chlorobiaceae</taxon>
        <taxon>Chlorobium/Pelodictyon group</taxon>
        <taxon>Chlorobium</taxon>
    </lineage>
</organism>
<accession>A1BIW8</accession>
<keyword id="KW-0028">Amino-acid biosynthesis</keyword>
<keyword id="KW-0067">ATP-binding</keyword>
<keyword id="KW-0963">Cytoplasm</keyword>
<keyword id="KW-0328">Glycosyltransferase</keyword>
<keyword id="KW-0368">Histidine biosynthesis</keyword>
<keyword id="KW-0460">Magnesium</keyword>
<keyword id="KW-0479">Metal-binding</keyword>
<keyword id="KW-0547">Nucleotide-binding</keyword>
<keyword id="KW-1185">Reference proteome</keyword>
<keyword id="KW-0808">Transferase</keyword>
<protein>
    <recommendedName>
        <fullName evidence="1">ATP phosphoribosyltransferase</fullName>
        <shortName evidence="1">ATP-PRT</shortName>
        <shortName evidence="1">ATP-PRTase</shortName>
        <ecNumber evidence="1">2.4.2.17</ecNumber>
    </recommendedName>
</protein>
<gene>
    <name evidence="1" type="primary">hisG</name>
    <name type="ordered locus">Cpha266_2357</name>
</gene>
<dbReference type="EC" id="2.4.2.17" evidence="1"/>
<dbReference type="EMBL" id="CP000492">
    <property type="protein sequence ID" value="ABL66345.1"/>
    <property type="molecule type" value="Genomic_DNA"/>
</dbReference>
<dbReference type="RefSeq" id="WP_011746130.1">
    <property type="nucleotide sequence ID" value="NC_008639.1"/>
</dbReference>
<dbReference type="SMR" id="A1BIW8"/>
<dbReference type="STRING" id="290317.Cpha266_2357"/>
<dbReference type="KEGG" id="cph:Cpha266_2357"/>
<dbReference type="eggNOG" id="COG0040">
    <property type="taxonomic scope" value="Bacteria"/>
</dbReference>
<dbReference type="HOGENOM" id="CLU_038115_1_1_10"/>
<dbReference type="OrthoDB" id="9801867at2"/>
<dbReference type="UniPathway" id="UPA00031">
    <property type="reaction ID" value="UER00006"/>
</dbReference>
<dbReference type="Proteomes" id="UP000008701">
    <property type="component" value="Chromosome"/>
</dbReference>
<dbReference type="GO" id="GO:0005737">
    <property type="term" value="C:cytoplasm"/>
    <property type="evidence" value="ECO:0007669"/>
    <property type="project" value="UniProtKB-SubCell"/>
</dbReference>
<dbReference type="GO" id="GO:0005524">
    <property type="term" value="F:ATP binding"/>
    <property type="evidence" value="ECO:0007669"/>
    <property type="project" value="UniProtKB-KW"/>
</dbReference>
<dbReference type="GO" id="GO:0003879">
    <property type="term" value="F:ATP phosphoribosyltransferase activity"/>
    <property type="evidence" value="ECO:0007669"/>
    <property type="project" value="UniProtKB-UniRule"/>
</dbReference>
<dbReference type="GO" id="GO:0000287">
    <property type="term" value="F:magnesium ion binding"/>
    <property type="evidence" value="ECO:0007669"/>
    <property type="project" value="UniProtKB-UniRule"/>
</dbReference>
<dbReference type="GO" id="GO:0000105">
    <property type="term" value="P:L-histidine biosynthetic process"/>
    <property type="evidence" value="ECO:0007669"/>
    <property type="project" value="UniProtKB-UniRule"/>
</dbReference>
<dbReference type="CDD" id="cd13593">
    <property type="entry name" value="PBP2_HisGL3"/>
    <property type="match status" value="1"/>
</dbReference>
<dbReference type="FunFam" id="3.30.70.120:FF:000002">
    <property type="entry name" value="ATP phosphoribosyltransferase"/>
    <property type="match status" value="1"/>
</dbReference>
<dbReference type="Gene3D" id="3.30.70.120">
    <property type="match status" value="1"/>
</dbReference>
<dbReference type="Gene3D" id="3.40.190.10">
    <property type="entry name" value="Periplasmic binding protein-like II"/>
    <property type="match status" value="2"/>
</dbReference>
<dbReference type="HAMAP" id="MF_00079">
    <property type="entry name" value="HisG_Long"/>
    <property type="match status" value="1"/>
</dbReference>
<dbReference type="InterPro" id="IPR020621">
    <property type="entry name" value="ATP-PRT_HisG_long"/>
</dbReference>
<dbReference type="InterPro" id="IPR013820">
    <property type="entry name" value="ATP_PRibTrfase_cat"/>
</dbReference>
<dbReference type="InterPro" id="IPR001348">
    <property type="entry name" value="ATP_PRibTrfase_HisG"/>
</dbReference>
<dbReference type="InterPro" id="IPR013115">
    <property type="entry name" value="HisG_C"/>
</dbReference>
<dbReference type="InterPro" id="IPR011322">
    <property type="entry name" value="N-reg_PII-like_a/b"/>
</dbReference>
<dbReference type="InterPro" id="IPR015867">
    <property type="entry name" value="N-reg_PII/ATP_PRibTrfase_C"/>
</dbReference>
<dbReference type="NCBIfam" id="TIGR00070">
    <property type="entry name" value="hisG"/>
    <property type="match status" value="1"/>
</dbReference>
<dbReference type="NCBIfam" id="TIGR03455">
    <property type="entry name" value="HisG_C-term"/>
    <property type="match status" value="1"/>
</dbReference>
<dbReference type="PANTHER" id="PTHR21403:SF10">
    <property type="entry name" value="ATP PHOSPHORIBOSYLTRANSFERASE"/>
    <property type="match status" value="1"/>
</dbReference>
<dbReference type="PANTHER" id="PTHR21403">
    <property type="entry name" value="ATP PHOSPHORIBOSYLTRANSFERASE ATP-PRTASE"/>
    <property type="match status" value="1"/>
</dbReference>
<dbReference type="Pfam" id="PF01634">
    <property type="entry name" value="HisG"/>
    <property type="match status" value="1"/>
</dbReference>
<dbReference type="Pfam" id="PF08029">
    <property type="entry name" value="HisG_C"/>
    <property type="match status" value="1"/>
</dbReference>
<dbReference type="SUPFAM" id="SSF54913">
    <property type="entry name" value="GlnB-like"/>
    <property type="match status" value="1"/>
</dbReference>
<dbReference type="SUPFAM" id="SSF53850">
    <property type="entry name" value="Periplasmic binding protein-like II"/>
    <property type="match status" value="1"/>
</dbReference>
<feature type="chain" id="PRO_1000004453" description="ATP phosphoribosyltransferase">
    <location>
        <begin position="1"/>
        <end position="294"/>
    </location>
</feature>
<reference key="1">
    <citation type="submission" date="2006-12" db="EMBL/GenBank/DDBJ databases">
        <title>Complete sequence of Chlorobium phaeobacteroides DSM 266.</title>
        <authorList>
            <consortium name="US DOE Joint Genome Institute"/>
            <person name="Copeland A."/>
            <person name="Lucas S."/>
            <person name="Lapidus A."/>
            <person name="Barry K."/>
            <person name="Detter J.C."/>
            <person name="Glavina del Rio T."/>
            <person name="Hammon N."/>
            <person name="Israni S."/>
            <person name="Pitluck S."/>
            <person name="Goltsman E."/>
            <person name="Schmutz J."/>
            <person name="Larimer F."/>
            <person name="Land M."/>
            <person name="Hauser L."/>
            <person name="Mikhailova N."/>
            <person name="Li T."/>
            <person name="Overmann J."/>
            <person name="Bryant D.A."/>
            <person name="Richardson P."/>
        </authorList>
    </citation>
    <scope>NUCLEOTIDE SEQUENCE [LARGE SCALE GENOMIC DNA]</scope>
    <source>
        <strain>DSM 266 / SMG 266 / 2430</strain>
    </source>
</reference>
<proteinExistence type="inferred from homology"/>